<dbReference type="EMBL" id="CR382136">
    <property type="protein sequence ID" value="CAG86811.2"/>
    <property type="molecule type" value="Genomic_DNA"/>
</dbReference>
<dbReference type="RefSeq" id="XP_458672.2">
    <property type="nucleotide sequence ID" value="XM_458672.1"/>
</dbReference>
<dbReference type="SMR" id="Q6BSZ8"/>
<dbReference type="FunCoup" id="Q6BSZ8">
    <property type="interactions" value="149"/>
</dbReference>
<dbReference type="STRING" id="284592.Q6BSZ8"/>
<dbReference type="GeneID" id="2901253"/>
<dbReference type="KEGG" id="dha:DEHA2D04730g"/>
<dbReference type="VEuPathDB" id="FungiDB:DEHA2D04730g"/>
<dbReference type="eggNOG" id="KOG4102">
    <property type="taxonomic scope" value="Eukaryota"/>
</dbReference>
<dbReference type="HOGENOM" id="CLU_098333_3_0_1"/>
<dbReference type="InParanoid" id="Q6BSZ8"/>
<dbReference type="OMA" id="RRHIQWA"/>
<dbReference type="OrthoDB" id="307488at2759"/>
<dbReference type="Proteomes" id="UP000000599">
    <property type="component" value="Chromosome D"/>
</dbReference>
<dbReference type="GO" id="GO:0005634">
    <property type="term" value="C:nucleus"/>
    <property type="evidence" value="ECO:0007669"/>
    <property type="project" value="UniProtKB-SubCell"/>
</dbReference>
<dbReference type="GO" id="GO:0000164">
    <property type="term" value="C:protein phosphatase type 1 complex"/>
    <property type="evidence" value="ECO:0007669"/>
    <property type="project" value="EnsemblFungi"/>
</dbReference>
<dbReference type="GO" id="GO:0008157">
    <property type="term" value="F:protein phosphatase 1 binding"/>
    <property type="evidence" value="ECO:0007669"/>
    <property type="project" value="TreeGrafter"/>
</dbReference>
<dbReference type="GO" id="GO:0072542">
    <property type="term" value="F:protein phosphatase activator activity"/>
    <property type="evidence" value="ECO:0007669"/>
    <property type="project" value="EnsemblFungi"/>
</dbReference>
<dbReference type="GO" id="GO:0004865">
    <property type="term" value="F:protein serine/threonine phosphatase inhibitor activity"/>
    <property type="evidence" value="ECO:0007669"/>
    <property type="project" value="EnsemblFungi"/>
</dbReference>
<dbReference type="GO" id="GO:0005977">
    <property type="term" value="P:glycogen metabolic process"/>
    <property type="evidence" value="ECO:0007669"/>
    <property type="project" value="EnsemblFungi"/>
</dbReference>
<dbReference type="GO" id="GO:0006873">
    <property type="term" value="P:intracellular monoatomic ion homeostasis"/>
    <property type="evidence" value="ECO:0007669"/>
    <property type="project" value="EnsemblFungi"/>
</dbReference>
<dbReference type="GO" id="GO:0007094">
    <property type="term" value="P:mitotic spindle assembly checkpoint signaling"/>
    <property type="evidence" value="ECO:0007669"/>
    <property type="project" value="EnsemblFungi"/>
</dbReference>
<dbReference type="GO" id="GO:1900180">
    <property type="term" value="P:regulation of protein localization to nucleus"/>
    <property type="evidence" value="ECO:0007669"/>
    <property type="project" value="EnsemblFungi"/>
</dbReference>
<dbReference type="InterPro" id="IPR011107">
    <property type="entry name" value="PPI_Ypi1"/>
</dbReference>
<dbReference type="PANTHER" id="PTHR20835:SF0">
    <property type="entry name" value="E3 UBIQUITIN-PROTEIN LIGASE PPP1R11"/>
    <property type="match status" value="1"/>
</dbReference>
<dbReference type="PANTHER" id="PTHR20835">
    <property type="entry name" value="E3 UBIQUITIN-PROTEIN LIGASE PPP1R11-RELATED"/>
    <property type="match status" value="1"/>
</dbReference>
<dbReference type="Pfam" id="PF07491">
    <property type="entry name" value="PPI_Ypi1"/>
    <property type="match status" value="1"/>
</dbReference>
<organism>
    <name type="scientific">Debaryomyces hansenii (strain ATCC 36239 / CBS 767 / BCRC 21394 / JCM 1990 / NBRC 0083 / IGC 2968)</name>
    <name type="common">Yeast</name>
    <name type="synonym">Torulaspora hansenii</name>
    <dbReference type="NCBI Taxonomy" id="284592"/>
    <lineage>
        <taxon>Eukaryota</taxon>
        <taxon>Fungi</taxon>
        <taxon>Dikarya</taxon>
        <taxon>Ascomycota</taxon>
        <taxon>Saccharomycotina</taxon>
        <taxon>Pichiomycetes</taxon>
        <taxon>Debaryomycetaceae</taxon>
        <taxon>Debaryomyces</taxon>
    </lineage>
</organism>
<comment type="function">
    <text evidence="1">Regulator of type 1 phosphatases which maintains protein phosphatase activity under strict control.</text>
</comment>
<comment type="subcellular location">
    <subcellularLocation>
        <location evidence="1">Nucleus</location>
    </subcellularLocation>
</comment>
<comment type="similarity">
    <text evidence="3">Belongs to the YPI1 family.</text>
</comment>
<name>YPI1_DEBHA</name>
<evidence type="ECO:0000250" key="1"/>
<evidence type="ECO:0000256" key="2">
    <source>
        <dbReference type="SAM" id="MobiDB-lite"/>
    </source>
</evidence>
<evidence type="ECO:0000305" key="3"/>
<proteinExistence type="inferred from homology"/>
<feature type="chain" id="PRO_0000333475" description="Type 1 phosphatases regulator YPI1">
    <location>
        <begin position="1"/>
        <end position="135"/>
    </location>
</feature>
<feature type="region of interest" description="Disordered" evidence="2">
    <location>
        <begin position="1"/>
        <end position="135"/>
    </location>
</feature>
<feature type="compositionally biased region" description="Low complexity" evidence="2">
    <location>
        <begin position="1"/>
        <end position="19"/>
    </location>
</feature>
<feature type="compositionally biased region" description="Gly residues" evidence="2">
    <location>
        <begin position="90"/>
        <end position="103"/>
    </location>
</feature>
<feature type="compositionally biased region" description="Basic residues" evidence="2">
    <location>
        <begin position="110"/>
        <end position="120"/>
    </location>
</feature>
<accession>Q6BSZ8</accession>
<gene>
    <name type="primary">YPI1</name>
    <name type="ordered locus">DEHA2D04730g</name>
</gene>
<reference key="1">
    <citation type="journal article" date="2004" name="Nature">
        <title>Genome evolution in yeasts.</title>
        <authorList>
            <person name="Dujon B."/>
            <person name="Sherman D."/>
            <person name="Fischer G."/>
            <person name="Durrens P."/>
            <person name="Casaregola S."/>
            <person name="Lafontaine I."/>
            <person name="de Montigny J."/>
            <person name="Marck C."/>
            <person name="Neuveglise C."/>
            <person name="Talla E."/>
            <person name="Goffard N."/>
            <person name="Frangeul L."/>
            <person name="Aigle M."/>
            <person name="Anthouard V."/>
            <person name="Babour A."/>
            <person name="Barbe V."/>
            <person name="Barnay S."/>
            <person name="Blanchin S."/>
            <person name="Beckerich J.-M."/>
            <person name="Beyne E."/>
            <person name="Bleykasten C."/>
            <person name="Boisrame A."/>
            <person name="Boyer J."/>
            <person name="Cattolico L."/>
            <person name="Confanioleri F."/>
            <person name="de Daruvar A."/>
            <person name="Despons L."/>
            <person name="Fabre E."/>
            <person name="Fairhead C."/>
            <person name="Ferry-Dumazet H."/>
            <person name="Groppi A."/>
            <person name="Hantraye F."/>
            <person name="Hennequin C."/>
            <person name="Jauniaux N."/>
            <person name="Joyet P."/>
            <person name="Kachouri R."/>
            <person name="Kerrest A."/>
            <person name="Koszul R."/>
            <person name="Lemaire M."/>
            <person name="Lesur I."/>
            <person name="Ma L."/>
            <person name="Muller H."/>
            <person name="Nicaud J.-M."/>
            <person name="Nikolski M."/>
            <person name="Oztas S."/>
            <person name="Ozier-Kalogeropoulos O."/>
            <person name="Pellenz S."/>
            <person name="Potier S."/>
            <person name="Richard G.-F."/>
            <person name="Straub M.-L."/>
            <person name="Suleau A."/>
            <person name="Swennen D."/>
            <person name="Tekaia F."/>
            <person name="Wesolowski-Louvel M."/>
            <person name="Westhof E."/>
            <person name="Wirth B."/>
            <person name="Zeniou-Meyer M."/>
            <person name="Zivanovic Y."/>
            <person name="Bolotin-Fukuhara M."/>
            <person name="Thierry A."/>
            <person name="Bouchier C."/>
            <person name="Caudron B."/>
            <person name="Scarpelli C."/>
            <person name="Gaillardin C."/>
            <person name="Weissenbach J."/>
            <person name="Wincker P."/>
            <person name="Souciet J.-L."/>
        </authorList>
    </citation>
    <scope>NUCLEOTIDE SEQUENCE [LARGE SCALE GENOMIC DNA]</scope>
    <source>
        <strain>ATCC 36239 / CBS 767 / BCRC 21394 / JCM 1990 / NBRC 0083 / IGC 2968</strain>
    </source>
</reference>
<sequence>MSVNPSNNTTTSTETNTETRPILHLRNKKTDKTAKPRVRWTNDVVDNENMDKKKSKICCIFHPQREFGESSSESSDESSDESDHSDDGAGEGASNGASNGGSGNDACCGNHKRKQKKPRKSTPNAYEKQPTYKNK</sequence>
<protein>
    <recommendedName>
        <fullName>Type 1 phosphatases regulator YPI1</fullName>
    </recommendedName>
</protein>
<keyword id="KW-0539">Nucleus</keyword>
<keyword id="KW-1185">Reference proteome</keyword>